<evidence type="ECO:0000255" key="1"/>
<evidence type="ECO:0000269" key="2">
    <source>
    </source>
</evidence>
<evidence type="ECO:0000269" key="3">
    <source>
    </source>
</evidence>
<evidence type="ECO:0000269" key="4">
    <source>
    </source>
</evidence>
<evidence type="ECO:0000269" key="5">
    <source>
    </source>
</evidence>
<evidence type="ECO:0000303" key="6">
    <source>
    </source>
</evidence>
<evidence type="ECO:0000305" key="7"/>
<evidence type="ECO:0000312" key="8">
    <source>
        <dbReference type="EMBL" id="CAA69836.3"/>
    </source>
</evidence>
<comment type="function">
    <text evidence="4">Forms a complex with CCMFC, CCMFN1 and CCMH that performs the assembly of heme with c-type apocytochromes in mitochondria.</text>
</comment>
<comment type="subunit">
    <text evidence="4">Interacts with CCMFC, CCMFN1, CCMH and CYTC-1.</text>
</comment>
<comment type="interaction">
    <interactant intactId="EBI-763400">
        <id>Q33884</id>
    </interactant>
    <interactant intactId="EBI-1797481">
        <id>P93286</id>
        <label>CCMFC</label>
    </interactant>
    <organismsDiffer>false</organismsDiffer>
    <experiments>4</experiments>
</comment>
<comment type="interaction">
    <interactant intactId="EBI-763400">
        <id>Q33884</id>
    </interactant>
    <interactant intactId="EBI-1797466">
        <id>Q9T6H8</id>
        <label>CCMFN1</label>
    </interactant>
    <organismsDiffer>false</organismsDiffer>
    <experiments>5</experiments>
</comment>
<comment type="interaction">
    <interactant intactId="EBI-763400">
        <id>Q33884</id>
    </interactant>
    <interactant intactId="EBI-763363">
        <id>Q9XI46</id>
        <label>CCMH</label>
    </interactant>
    <organismsDiffer>false</organismsDiffer>
    <experiments>3</experiments>
</comment>
<comment type="interaction">
    <interactant intactId="EBI-763400">
        <id>Q33884</id>
    </interactant>
    <interactant intactId="EBI-1777995">
        <id>Q9FKS5</id>
        <label>CYC1-2</label>
    </interactant>
    <organismsDiffer>false</organismsDiffer>
    <experiments>4</experiments>
</comment>
<comment type="subcellular location">
    <subcellularLocation>
        <location evidence="4">Mitochondrion inner membrane</location>
        <topology evidence="1">Multi-pass membrane protein</topology>
    </subcellularLocation>
</comment>
<comment type="RNA editing">
    <location>
        <position position="22" evidence="2 3 5"/>
    </location>
    <location>
        <position position="59" evidence="2 3 5"/>
    </location>
    <location>
        <position position="70" evidence="2 3 5"/>
    </location>
    <location>
        <position position="76" evidence="2 3 5"/>
    </location>
    <location>
        <position position="87" evidence="2 3 5"/>
    </location>
    <location>
        <position position="93" evidence="2 3 5"/>
    </location>
    <location>
        <position position="101" evidence="2 3 5"/>
    </location>
    <location>
        <position position="107" evidence="2 3 5"/>
    </location>
    <location>
        <position position="115" evidence="2 3 5"/>
    </location>
    <location>
        <position position="119" evidence="2 3 5"/>
    </location>
    <location>
        <position position="131" evidence="2 3 5"/>
    </location>
    <location>
        <position position="156" evidence="2 3 5"/>
    </location>
</comment>
<comment type="miscellaneous">
    <text>A stretch of 270 kb of the mitochondrial genome is duplicated within the centromere of chromosome 2 resulting in the duplication of the gene. The expression of this duplicated gene (At2g07768) is not demonstrated. It is also probably not RNA edited and therefore differs in all the positions known to be edited.</text>
</comment>
<comment type="similarity">
    <text evidence="7">Belongs to the CcmF/CycK/Ccl1/NrfE/CcsA family.</text>
</comment>
<comment type="caution">
    <text evidence="7">Ref.1 indicates that this sequence represents the C-terminal part of a protein produced after trans-splicing. No experimental data confirms this assertion.</text>
</comment>
<comment type="sequence caution" evidence="7">
    <conflict type="frameshift">
        <sequence resource="EMBL" id="AC007143"/>
    </conflict>
</comment>
<name>CCMF2_ARATH</name>
<keyword id="KW-0201">Cytochrome c-type biogenesis</keyword>
<keyword id="KW-0472">Membrane</keyword>
<keyword id="KW-0496">Mitochondrion</keyword>
<keyword id="KW-0999">Mitochondrion inner membrane</keyword>
<keyword id="KW-1185">Reference proteome</keyword>
<keyword id="KW-0691">RNA editing</keyword>
<keyword id="KW-0812">Transmembrane</keyword>
<keyword id="KW-1133">Transmembrane helix</keyword>
<sequence length="203" mass="23535">VDTGREQAKRVVRNGKKETTTLPLCWTAGANTVVSDQDQEPIRIWILTCWWFLTVGILLGSWWAYHELGWGGWWFWDPVENASFMPWVLATACIHSVILPLLHSWTLFLNIVTFLCCVLGTFSIRSGLLASVHSFATDDTRGIFLWWFFLLMTGISMILFYQMKQQASVRRTYKKEMVVARSTLVHLRHSARAQPRPVMLWKN</sequence>
<accession>Q33884</accession>
<accession>A0A2P2CLH4</accession>
<accession>A7KNF1</accession>
<accession>O03602</accession>
<accession>Q9T6H7</accession>
<feature type="chain" id="PRO_0000201595" description="Cytochrome c biogenesis CcmF N-terminal-like mitochondrial protein 2">
    <location>
        <begin position="1" status="less than"/>
        <end position="203"/>
    </location>
</feature>
<feature type="transmembrane region" description="Helical" evidence="1">
    <location>
        <begin position="44"/>
        <end position="64"/>
    </location>
</feature>
<feature type="transmembrane region" description="Helical" evidence="1">
    <location>
        <begin position="143"/>
        <end position="163"/>
    </location>
</feature>
<feature type="sequence conflict" description="In Ref. 4; AC007730." evidence="7" ref="4">
    <original>T</original>
    <variation>S</variation>
    <location>
        <position position="21"/>
    </location>
</feature>
<feature type="non-terminal residue">
    <location>
        <position position="1"/>
    </location>
</feature>
<protein>
    <recommendedName>
        <fullName evidence="7">Cytochrome c biogenesis CcmF N-terminal-like mitochondrial protein 2</fullName>
    </recommendedName>
    <alternativeName>
        <fullName evidence="8">Cytochrome c biogenesis orf203</fullName>
    </alternativeName>
</protein>
<geneLocation type="mitochondrion"/>
<gene>
    <name evidence="6" type="primary">CCMFN2</name>
    <name type="synonym">CC6BN2</name>
    <name evidence="8" type="synonym">CCB203</name>
    <name type="ordered locus">AtMg00960</name>
</gene>
<proteinExistence type="evidence at protein level"/>
<dbReference type="EMBL" id="X98302">
    <property type="protein sequence ID" value="CAA66946.1"/>
    <property type="status" value="ALT_SEQ"/>
    <property type="molecule type" value="Genomic_DNA"/>
</dbReference>
<dbReference type="EMBL" id="Y08501">
    <property type="protein sequence ID" value="CAA69836.3"/>
    <property type="status" value="ALT_SEQ"/>
    <property type="molecule type" value="Genomic_DNA"/>
</dbReference>
<dbReference type="EMBL" id="BK010421">
    <property type="protein sequence ID" value="DAB41519.2"/>
    <property type="status" value="ALT_SEQ"/>
    <property type="molecule type" value="Genomic_DNA"/>
</dbReference>
<dbReference type="EMBL" id="AC007143">
    <property type="status" value="NOT_ANNOTATED_CDS"/>
    <property type="molecule type" value="Genomic_DNA"/>
</dbReference>
<dbReference type="EMBL" id="AC007730">
    <property type="status" value="NOT_ANNOTATED_CDS"/>
    <property type="molecule type" value="Genomic_DNA"/>
</dbReference>
<dbReference type="EMBL" id="EF488894">
    <property type="protein sequence ID" value="ABS50606.1"/>
    <property type="status" value="ALT_SEQ"/>
    <property type="molecule type" value="mRNA"/>
</dbReference>
<dbReference type="EMBL" id="EF488895">
    <property type="protein sequence ID" value="ABS50607.1"/>
    <property type="status" value="ALT_SEQ"/>
    <property type="molecule type" value="mRNA"/>
</dbReference>
<dbReference type="RefSeq" id="NP_085550.2">
    <property type="nucleotide sequence ID" value="NC_001284.2"/>
</dbReference>
<dbReference type="SMR" id="Q33884"/>
<dbReference type="FunCoup" id="Q33884">
    <property type="interactions" value="3"/>
</dbReference>
<dbReference type="IntAct" id="Q33884">
    <property type="interactions" value="5"/>
</dbReference>
<dbReference type="STRING" id="3702.Q33884"/>
<dbReference type="SwissPalm" id="Q33884"/>
<dbReference type="PaxDb" id="3702-ATMG00960.1"/>
<dbReference type="Araport" id="ATMG00960"/>
<dbReference type="TAIR" id="ATMG00960"/>
<dbReference type="eggNOG" id="ENOG502QQ5D">
    <property type="taxonomic scope" value="Eukaryota"/>
</dbReference>
<dbReference type="HOGENOM" id="CLU_024111_0_0_1"/>
<dbReference type="InParanoid" id="Q33884"/>
<dbReference type="PhylomeDB" id="Q33884"/>
<dbReference type="Proteomes" id="UP000006548">
    <property type="component" value="Mitochondrion MT"/>
</dbReference>
<dbReference type="ExpressionAtlas" id="Q33884">
    <property type="expression patterns" value="baseline and differential"/>
</dbReference>
<dbReference type="GO" id="GO:0005743">
    <property type="term" value="C:mitochondrial inner membrane"/>
    <property type="evidence" value="ECO:0000314"/>
    <property type="project" value="UniProtKB"/>
</dbReference>
<dbReference type="GO" id="GO:0020037">
    <property type="term" value="F:heme binding"/>
    <property type="evidence" value="ECO:0007669"/>
    <property type="project" value="InterPro"/>
</dbReference>
<dbReference type="GO" id="GO:0015232">
    <property type="term" value="F:heme transmembrane transporter activity"/>
    <property type="evidence" value="ECO:0007669"/>
    <property type="project" value="InterPro"/>
</dbReference>
<dbReference type="GO" id="GO:0017004">
    <property type="term" value="P:cytochrome complex assembly"/>
    <property type="evidence" value="ECO:0000304"/>
    <property type="project" value="UniProtKB"/>
</dbReference>
<dbReference type="InterPro" id="IPR002541">
    <property type="entry name" value="Cyt_c_assembly"/>
</dbReference>
<dbReference type="InterPro" id="IPR003567">
    <property type="entry name" value="Cyt_c_biogenesis"/>
</dbReference>
<dbReference type="InterPro" id="IPR003569">
    <property type="entry name" value="Cyt_c_biogenesis_plant"/>
</dbReference>
<dbReference type="PANTHER" id="PTHR43653">
    <property type="entry name" value="CYTOCHROME C ASSEMBLY PROTEIN-RELATED"/>
    <property type="match status" value="1"/>
</dbReference>
<dbReference type="PANTHER" id="PTHR43653:SF1">
    <property type="entry name" value="CYTOCHROME C-TYPE BIOGENESIS PROTEIN CCMF"/>
    <property type="match status" value="1"/>
</dbReference>
<dbReference type="Pfam" id="PF01578">
    <property type="entry name" value="Cytochrom_C_asm"/>
    <property type="match status" value="1"/>
</dbReference>
<dbReference type="PRINTS" id="PR01410">
    <property type="entry name" value="CCBIOGENESIS"/>
</dbReference>
<dbReference type="PRINTS" id="PR01412">
    <property type="entry name" value="CCBSBIOGNSIS"/>
</dbReference>
<reference key="1">
    <citation type="submission" date="1996-06" db="EMBL/GenBank/DDBJ databases">
        <authorList>
            <person name="Schuster W."/>
        </authorList>
    </citation>
    <scope>NUCLEOTIDE SEQUENCE [GENOMIC DNA]</scope>
    <source>
        <strain>cv. C24</strain>
    </source>
</reference>
<reference key="2">
    <citation type="journal article" date="1997" name="Nat. Genet.">
        <title>The mitochondrial genome of Arabidopsis thaliana contains 57 genes in 366,924 nucleotides.</title>
        <authorList>
            <person name="Unseld M."/>
            <person name="Marienfeld J.R."/>
            <person name="Brandt P."/>
            <person name="Brennicke A."/>
        </authorList>
    </citation>
    <scope>NUCLEOTIDE SEQUENCE [LARGE SCALE GENOMIC DNA]</scope>
    <source>
        <strain>cv. C24</strain>
    </source>
</reference>
<reference key="3">
    <citation type="journal article" date="2018" name="Plant Cell">
        <title>Correction of persistent errors in Arabidopsis reference mitochondrial genomes.</title>
        <authorList>
            <person name="Sloan D.B."/>
            <person name="Wu Z."/>
            <person name="Sharbrough J."/>
        </authorList>
    </citation>
    <scope>NUCLEOTIDE SEQUENCE [LARGE SCALE GENOMIC DNA]</scope>
    <scope>RNA EDITING</scope>
    <source>
        <strain>cv. Columbia</strain>
    </source>
</reference>
<reference key="4">
    <citation type="journal article" date="1999" name="Nature">
        <title>Sequence and analysis of chromosome 2 of the plant Arabidopsis thaliana.</title>
        <authorList>
            <person name="Lin X."/>
            <person name="Kaul S."/>
            <person name="Rounsley S.D."/>
            <person name="Shea T.P."/>
            <person name="Benito M.-I."/>
            <person name="Town C.D."/>
            <person name="Fujii C.Y."/>
            <person name="Mason T.M."/>
            <person name="Bowman C.L."/>
            <person name="Barnstead M.E."/>
            <person name="Feldblyum T.V."/>
            <person name="Buell C.R."/>
            <person name="Ketchum K.A."/>
            <person name="Lee J.J."/>
            <person name="Ronning C.M."/>
            <person name="Koo H.L."/>
            <person name="Moffat K.S."/>
            <person name="Cronin L.A."/>
            <person name="Shen M."/>
            <person name="Pai G."/>
            <person name="Van Aken S."/>
            <person name="Umayam L."/>
            <person name="Tallon L.J."/>
            <person name="Gill J.E."/>
            <person name="Adams M.D."/>
            <person name="Carrera A.J."/>
            <person name="Creasy T.H."/>
            <person name="Goodman H.M."/>
            <person name="Somerville C.R."/>
            <person name="Copenhaver G.P."/>
            <person name="Preuss D."/>
            <person name="Nierman W.C."/>
            <person name="White O."/>
            <person name="Eisen J.A."/>
            <person name="Salzberg S.L."/>
            <person name="Fraser C.M."/>
            <person name="Venter J.C."/>
        </authorList>
    </citation>
    <scope>NUCLEOTIDE SEQUENCE [LARGE SCALE GENOMIC DNA] (AT2G07768)</scope>
    <source>
        <strain>cv. Columbia</strain>
    </source>
</reference>
<reference key="5">
    <citation type="journal article" date="2008" name="Genetics">
        <title>Genetic architecture of mitochondrial editing in Arabidopsis thaliana.</title>
        <authorList>
            <person name="Bentolila S."/>
            <person name="Elliott L.E."/>
            <person name="Hanson M.R."/>
        </authorList>
    </citation>
    <scope>NUCLEOTIDE SEQUENCE [MRNA] OF 8-193</scope>
    <scope>RNA EDITING</scope>
    <source>
        <strain>cv. Columbia</strain>
        <strain>cv. Landsberg erecta</strain>
        <tissue>Rosette leaf</tissue>
    </source>
</reference>
<reference key="6">
    <citation type="journal article" date="1999" name="Proc. Natl. Acad. Sci. U.S.A.">
        <title>RNA editing in Arabidopsis mitochondria effects 441 C to U changes in ORFs.</title>
        <authorList>
            <person name="Giege P."/>
            <person name="Brennicke A."/>
        </authorList>
    </citation>
    <scope>RNA EDITING</scope>
</reference>
<reference key="7">
    <citation type="journal article" date="2008" name="J. Biol. Chem.">
        <title>The three mitochondrial encoded CcmF proteins form a complex that interacts with CCMH and c-type apocytochromes in Arabidopsis.</title>
        <authorList>
            <person name="Rayapuram N."/>
            <person name="Hagenmuller J."/>
            <person name="Grienenberger J.M."/>
            <person name="Bonnard G."/>
            <person name="Giege P."/>
        </authorList>
    </citation>
    <scope>FUNCTION</scope>
    <scope>INTERACTION WITH CCMFC; CCMFN1; CCMH AND CYTC-1</scope>
    <scope>SUBCELLULAR LOCATION</scope>
</reference>
<organism>
    <name type="scientific">Arabidopsis thaliana</name>
    <name type="common">Mouse-ear cress</name>
    <dbReference type="NCBI Taxonomy" id="3702"/>
    <lineage>
        <taxon>Eukaryota</taxon>
        <taxon>Viridiplantae</taxon>
        <taxon>Streptophyta</taxon>
        <taxon>Embryophyta</taxon>
        <taxon>Tracheophyta</taxon>
        <taxon>Spermatophyta</taxon>
        <taxon>Magnoliopsida</taxon>
        <taxon>eudicotyledons</taxon>
        <taxon>Gunneridae</taxon>
        <taxon>Pentapetalae</taxon>
        <taxon>rosids</taxon>
        <taxon>malvids</taxon>
        <taxon>Brassicales</taxon>
        <taxon>Brassicaceae</taxon>
        <taxon>Camelineae</taxon>
        <taxon>Arabidopsis</taxon>
    </lineage>
</organism>